<organism>
    <name type="scientific">Caenorhabditis elegans</name>
    <dbReference type="NCBI Taxonomy" id="6239"/>
    <lineage>
        <taxon>Eukaryota</taxon>
        <taxon>Metazoa</taxon>
        <taxon>Ecdysozoa</taxon>
        <taxon>Nematoda</taxon>
        <taxon>Chromadorea</taxon>
        <taxon>Rhabditida</taxon>
        <taxon>Rhabditina</taxon>
        <taxon>Rhabditomorpha</taxon>
        <taxon>Rhabditoidea</taxon>
        <taxon>Rhabditidae</taxon>
        <taxon>Peloderinae</taxon>
        <taxon>Caenorhabditis</taxon>
    </lineage>
</organism>
<feature type="chain" id="PRO_0000065214" description="Uncharacterized protein txt-18">
    <location>
        <begin position="1"/>
        <end position="260"/>
    </location>
</feature>
<name>YQD1_CAEEL</name>
<accession>Q09262</accession>
<dbReference type="EMBL" id="FO080708">
    <property type="protein sequence ID" value="CCD66027.1"/>
    <property type="molecule type" value="Genomic_DNA"/>
</dbReference>
<dbReference type="PIR" id="T15739">
    <property type="entry name" value="T15739"/>
</dbReference>
<dbReference type="BioGRID" id="39389">
    <property type="interactions" value="5"/>
</dbReference>
<dbReference type="FunCoup" id="Q09262">
    <property type="interactions" value="138"/>
</dbReference>
<dbReference type="IntAct" id="Q09262">
    <property type="interactions" value="1"/>
</dbReference>
<dbReference type="PaxDb" id="6239-C32D5.1"/>
<dbReference type="EnsemblMetazoa" id="C32D5.1.1">
    <property type="protein sequence ID" value="C32D5.1.1"/>
    <property type="gene ID" value="WBGene00016310"/>
</dbReference>
<dbReference type="KEGG" id="cel:CELE_C32D5.1"/>
<dbReference type="UCSC" id="C32D5.1">
    <property type="organism name" value="c. elegans"/>
</dbReference>
<dbReference type="AGR" id="WB:WBGene00016310"/>
<dbReference type="CTD" id="174049"/>
<dbReference type="WormBase" id="C32D5.1">
    <property type="protein sequence ID" value="CE34726"/>
    <property type="gene ID" value="WBGene00016310"/>
    <property type="gene designation" value="txt-18"/>
</dbReference>
<dbReference type="eggNOG" id="ENOG502TIRE">
    <property type="taxonomic scope" value="Eukaryota"/>
</dbReference>
<dbReference type="HOGENOM" id="CLU_1070527_0_0_1"/>
<dbReference type="InParanoid" id="Q09262"/>
<dbReference type="OMA" id="PPFSHYD"/>
<dbReference type="OrthoDB" id="5855436at2759"/>
<dbReference type="PRO" id="PR:Q09262"/>
<dbReference type="Proteomes" id="UP000001940">
    <property type="component" value="Chromosome II"/>
</dbReference>
<dbReference type="Bgee" id="WBGene00016310">
    <property type="expression patterns" value="Expressed in pharyngeal muscle cell (C elegans) and 3 other cell types or tissues"/>
</dbReference>
<reference key="1">
    <citation type="journal article" date="1998" name="Science">
        <title>Genome sequence of the nematode C. elegans: a platform for investigating biology.</title>
        <authorList>
            <consortium name="The C. elegans sequencing consortium"/>
        </authorList>
    </citation>
    <scope>NUCLEOTIDE SEQUENCE [LARGE SCALE GENOMIC DNA]</scope>
    <source>
        <strain>Bristol N2</strain>
    </source>
</reference>
<evidence type="ECO:0000305" key="1"/>
<evidence type="ECO:0000312" key="2">
    <source>
        <dbReference type="WormBase" id="C32D5.1"/>
    </source>
</evidence>
<keyword id="KW-1185">Reference proteome</keyword>
<sequence>MEKFIDLLEFGSAEQKRKMGRPSKIPPFSHYDAYRRSDIDFFISLFSGREELYSPCKKNSDFRQKAFYIIEKKCGHFLAMRKGRNAEKLWLYLFNDFEKMIRNGGDKNDEKSKSIVPFYDCLQFLIPYLEKTDSLSKLTLTTCNAEADDQQVKAKKPKIEHELSEDKLNDDWLQKVIDTVTCQQSTSCTSIQLNSSAPSTCSAKTPNSTANLPTSEKHADIIAYVTNFLEDVPNDKLMLHKVRLFQFIEEEKSRLKEESK</sequence>
<proteinExistence type="predicted"/>
<protein>
    <recommendedName>
        <fullName evidence="1">Uncharacterized protein txt-18</fullName>
    </recommendedName>
    <alternativeName>
        <fullName evidence="2">transcellular chaperone signaling (x)cross tissue 18</fullName>
    </alternativeName>
</protein>
<gene>
    <name evidence="2" type="primary">txt-18</name>
    <name evidence="2" type="ORF">C32D5.1</name>
</gene>